<name>M32_STRTR</name>
<comment type="function">
    <text evidence="5">This protein is one of the different antigenic serotypes of protein M. Protein M is closely associated with virulence of the bacterium and can render the organism resistant to phagocytosis.</text>
</comment>
<comment type="subcellular location">
    <subcellularLocation>
        <location evidence="2 5">Secreted</location>
        <location evidence="2 5">Cell wall</location>
        <topology evidence="2 5">Peptidoglycan-anchor</topology>
    </subcellularLocation>
</comment>
<comment type="similarity">
    <text evidence="1">Belongs to the M protein family.</text>
</comment>
<keyword id="KW-0134">Cell wall</keyword>
<keyword id="KW-0903">Direct protein sequencing</keyword>
<keyword id="KW-0572">Peptidoglycan-anchor</keyword>
<keyword id="KW-0581">Phagocytosis</keyword>
<keyword id="KW-0964">Secreted</keyword>
<keyword id="KW-0843">Virulence</keyword>
<dbReference type="GO" id="GO:0005576">
    <property type="term" value="C:extracellular region"/>
    <property type="evidence" value="ECO:0007669"/>
    <property type="project" value="UniProtKB-KW"/>
</dbReference>
<dbReference type="GO" id="GO:0006909">
    <property type="term" value="P:phagocytosis"/>
    <property type="evidence" value="ECO:0007669"/>
    <property type="project" value="UniProtKB-KW"/>
</dbReference>
<proteinExistence type="evidence at protein level"/>
<sequence length="14" mass="1739">NHQLTQENERLTQK</sequence>
<feature type="chain" id="PRO_0000273262" description="M protein, serotype 32">
    <location>
        <begin position="1" status="less than"/>
        <end position="14" status="greater than"/>
    </location>
</feature>
<feature type="non-terminal residue" evidence="4">
    <location>
        <position position="1"/>
    </location>
</feature>
<feature type="non-terminal residue" evidence="4">
    <location>
        <position position="14"/>
    </location>
</feature>
<protein>
    <recommendedName>
        <fullName>M protein, serotype 32</fullName>
    </recommendedName>
</protein>
<accession>P83330</accession>
<organism>
    <name type="scientific">Streptococcus thermophilus</name>
    <dbReference type="NCBI Taxonomy" id="1308"/>
    <lineage>
        <taxon>Bacteria</taxon>
        <taxon>Bacillati</taxon>
        <taxon>Bacillota</taxon>
        <taxon>Bacilli</taxon>
        <taxon>Lactobacillales</taxon>
        <taxon>Streptococcaceae</taxon>
        <taxon>Streptococcus</taxon>
    </lineage>
</organism>
<evidence type="ECO:0000255" key="1"/>
<evidence type="ECO:0000255" key="2">
    <source>
        <dbReference type="PROSITE-ProRule" id="PRU00477"/>
    </source>
</evidence>
<evidence type="ECO:0000269" key="3">
    <source ref="1"/>
</evidence>
<evidence type="ECO:0000303" key="4">
    <source ref="1"/>
</evidence>
<evidence type="ECO:0000305" key="5"/>
<reference evidence="5" key="1">
    <citation type="journal article" date="2002" name="Lait">
        <title>Comparative study of the protein composition of three strains of Streptococcus thermophilus grown either in M17 medium or in milk.</title>
        <authorList>
            <person name="Guimont C."/>
            <person name="Chopard M.-A."/>
            <person name="Gaillard J.-L."/>
            <person name="Chamba J.-F."/>
        </authorList>
    </citation>
    <scope>PROTEIN SEQUENCE</scope>
    <source>
        <strain evidence="3">ITGST82</strain>
    </source>
</reference>